<gene>
    <name evidence="1" type="primary">rplA</name>
    <name type="ordered locus">BUAPTUC7_037</name>
</gene>
<comment type="function">
    <text evidence="1">Binds directly to 23S rRNA. The L1 stalk is quite mobile in the ribosome, and is involved in E site tRNA release.</text>
</comment>
<comment type="function">
    <text evidence="1">Protein L1 is also a translational repressor protein, it controls the translation of the L11 operon by binding to its mRNA.</text>
</comment>
<comment type="subunit">
    <text evidence="1">Part of the 50S ribosomal subunit.</text>
</comment>
<comment type="similarity">
    <text evidence="1">Belongs to the universal ribosomal protein uL1 family.</text>
</comment>
<protein>
    <recommendedName>
        <fullName evidence="1">Large ribosomal subunit protein uL1</fullName>
    </recommendedName>
    <alternativeName>
        <fullName evidence="2">50S ribosomal protein L1</fullName>
    </alternativeName>
</protein>
<dbReference type="EMBL" id="CP001158">
    <property type="protein sequence ID" value="ACL29868.1"/>
    <property type="molecule type" value="Genomic_DNA"/>
</dbReference>
<dbReference type="RefSeq" id="WP_009873998.1">
    <property type="nucleotide sequence ID" value="NC_011834.1"/>
</dbReference>
<dbReference type="SMR" id="B8D6V3"/>
<dbReference type="KEGG" id="bau:BUAPTUC7_037"/>
<dbReference type="HOGENOM" id="CLU_062853_0_0_6"/>
<dbReference type="GO" id="GO:0022625">
    <property type="term" value="C:cytosolic large ribosomal subunit"/>
    <property type="evidence" value="ECO:0007669"/>
    <property type="project" value="TreeGrafter"/>
</dbReference>
<dbReference type="GO" id="GO:0019843">
    <property type="term" value="F:rRNA binding"/>
    <property type="evidence" value="ECO:0007669"/>
    <property type="project" value="UniProtKB-UniRule"/>
</dbReference>
<dbReference type="GO" id="GO:0003735">
    <property type="term" value="F:structural constituent of ribosome"/>
    <property type="evidence" value="ECO:0007669"/>
    <property type="project" value="InterPro"/>
</dbReference>
<dbReference type="GO" id="GO:0000049">
    <property type="term" value="F:tRNA binding"/>
    <property type="evidence" value="ECO:0007669"/>
    <property type="project" value="UniProtKB-KW"/>
</dbReference>
<dbReference type="GO" id="GO:0006417">
    <property type="term" value="P:regulation of translation"/>
    <property type="evidence" value="ECO:0007669"/>
    <property type="project" value="UniProtKB-KW"/>
</dbReference>
<dbReference type="GO" id="GO:0006412">
    <property type="term" value="P:translation"/>
    <property type="evidence" value="ECO:0007669"/>
    <property type="project" value="UniProtKB-UniRule"/>
</dbReference>
<dbReference type="CDD" id="cd00403">
    <property type="entry name" value="Ribosomal_L1"/>
    <property type="match status" value="1"/>
</dbReference>
<dbReference type="FunFam" id="3.40.50.790:FF:000001">
    <property type="entry name" value="50S ribosomal protein L1"/>
    <property type="match status" value="1"/>
</dbReference>
<dbReference type="Gene3D" id="3.30.190.20">
    <property type="match status" value="1"/>
</dbReference>
<dbReference type="Gene3D" id="3.40.50.790">
    <property type="match status" value="1"/>
</dbReference>
<dbReference type="HAMAP" id="MF_01318_B">
    <property type="entry name" value="Ribosomal_uL1_B"/>
    <property type="match status" value="1"/>
</dbReference>
<dbReference type="InterPro" id="IPR005878">
    <property type="entry name" value="Ribosom_uL1_bac-type"/>
</dbReference>
<dbReference type="InterPro" id="IPR002143">
    <property type="entry name" value="Ribosomal_uL1"/>
</dbReference>
<dbReference type="InterPro" id="IPR023674">
    <property type="entry name" value="Ribosomal_uL1-like"/>
</dbReference>
<dbReference type="InterPro" id="IPR028364">
    <property type="entry name" value="Ribosomal_uL1/biogenesis"/>
</dbReference>
<dbReference type="InterPro" id="IPR016095">
    <property type="entry name" value="Ribosomal_uL1_3-a/b-sand"/>
</dbReference>
<dbReference type="InterPro" id="IPR023673">
    <property type="entry name" value="Ribosomal_uL1_CS"/>
</dbReference>
<dbReference type="NCBIfam" id="TIGR01169">
    <property type="entry name" value="rplA_bact"/>
    <property type="match status" value="1"/>
</dbReference>
<dbReference type="PANTHER" id="PTHR36427">
    <property type="entry name" value="54S RIBOSOMAL PROTEIN L1, MITOCHONDRIAL"/>
    <property type="match status" value="1"/>
</dbReference>
<dbReference type="PANTHER" id="PTHR36427:SF3">
    <property type="entry name" value="LARGE RIBOSOMAL SUBUNIT PROTEIN UL1M"/>
    <property type="match status" value="1"/>
</dbReference>
<dbReference type="Pfam" id="PF00687">
    <property type="entry name" value="Ribosomal_L1"/>
    <property type="match status" value="1"/>
</dbReference>
<dbReference type="PIRSF" id="PIRSF002155">
    <property type="entry name" value="Ribosomal_L1"/>
    <property type="match status" value="1"/>
</dbReference>
<dbReference type="SUPFAM" id="SSF56808">
    <property type="entry name" value="Ribosomal protein L1"/>
    <property type="match status" value="1"/>
</dbReference>
<dbReference type="PROSITE" id="PS01199">
    <property type="entry name" value="RIBOSOMAL_L1"/>
    <property type="match status" value="1"/>
</dbReference>
<feature type="chain" id="PRO_1000165666" description="Large ribosomal subunit protein uL1">
    <location>
        <begin position="1"/>
        <end position="231"/>
    </location>
</feature>
<reference key="1">
    <citation type="journal article" date="2009" name="Science">
        <title>The dynamics and time scale of ongoing genomic erosion in symbiotic bacteria.</title>
        <authorList>
            <person name="Moran N.A."/>
            <person name="McLaughlin H.J."/>
            <person name="Sorek R."/>
        </authorList>
    </citation>
    <scope>NUCLEOTIDE SEQUENCE [LARGE SCALE GENOMIC DNA]</scope>
    <source>
        <strain>Tuc7</strain>
    </source>
</reference>
<keyword id="KW-0678">Repressor</keyword>
<keyword id="KW-0687">Ribonucleoprotein</keyword>
<keyword id="KW-0689">Ribosomal protein</keyword>
<keyword id="KW-0694">RNA-binding</keyword>
<keyword id="KW-0699">rRNA-binding</keyword>
<keyword id="KW-0810">Translation regulation</keyword>
<keyword id="KW-0820">tRNA-binding</keyword>
<name>RL1_BUCAT</name>
<sequence>MNKKTKRMKKIKEHINFEKLHHIDETIDLLKKSSTVKFNESIDIAINLGINSKKSDQNIRSSTVLPNGIGRSIRVAVFTQGDNIAIAKDAGAELIGMEDLSEKIKKEGVDFDVVIATPDAMKIVTQLGQILGPRNLMPNTKLGTITTNIAEAIKNAKTGQVRYRNDKNGIIHATIGRINFHKNEIKENLNVFLESIKKAKPPQSKGIYIKKIVLSTTMGVGLMVDQSTLSL</sequence>
<proteinExistence type="inferred from homology"/>
<evidence type="ECO:0000255" key="1">
    <source>
        <dbReference type="HAMAP-Rule" id="MF_01318"/>
    </source>
</evidence>
<evidence type="ECO:0000305" key="2"/>
<accession>B8D6V3</accession>
<organism>
    <name type="scientific">Buchnera aphidicola subsp. Acyrthosiphon pisum (strain Tuc7)</name>
    <dbReference type="NCBI Taxonomy" id="561501"/>
    <lineage>
        <taxon>Bacteria</taxon>
        <taxon>Pseudomonadati</taxon>
        <taxon>Pseudomonadota</taxon>
        <taxon>Gammaproteobacteria</taxon>
        <taxon>Enterobacterales</taxon>
        <taxon>Erwiniaceae</taxon>
        <taxon>Buchnera</taxon>
    </lineage>
</organism>